<sequence>MSNSNSGKVRVAVVYGGRSSEHSVSCVSAGAIMAHLDPEKYDVIPVGITVDGAWVVGETDPQKLTLIDRTMPEVEHREEVRPSLDPAHRGEFHFSDGSLYATADVIFPVLHGRFGEDGTVQGLFALSDIPVVGPGVLASAAGMDKEYTKKLMAAEGLPIGREVILRDRTELTEAEKNLLGLPVFVKPARGGSSIGISRVTAWEDFNKAVGLARAHDEKVIVESEIVGSEVECGVLQYPDGRIVASVPALLSGTESGAGGFYDFDTKYLDNVVTAEIPAPLDEKTTELIQSLAVESFQALACEGLARVDFFVTANGPVLNEINTMPGFTPISMYPQMFTASGVAYEELLDVLVQQALHRDN</sequence>
<keyword id="KW-0067">ATP-binding</keyword>
<keyword id="KW-0133">Cell shape</keyword>
<keyword id="KW-0961">Cell wall biogenesis/degradation</keyword>
<keyword id="KW-0963">Cytoplasm</keyword>
<keyword id="KW-0436">Ligase</keyword>
<keyword id="KW-0460">Magnesium</keyword>
<keyword id="KW-0464">Manganese</keyword>
<keyword id="KW-0479">Metal-binding</keyword>
<keyword id="KW-0547">Nucleotide-binding</keyword>
<keyword id="KW-0573">Peptidoglycan synthesis</keyword>
<dbReference type="EC" id="6.3.2.4" evidence="2"/>
<dbReference type="EMBL" id="AP009044">
    <property type="protein sequence ID" value="BAF54381.1"/>
    <property type="molecule type" value="Genomic_DNA"/>
</dbReference>
<dbReference type="RefSeq" id="WP_011897164.1">
    <property type="nucleotide sequence ID" value="NC_009342.1"/>
</dbReference>
<dbReference type="SMR" id="A4QDT4"/>
<dbReference type="KEGG" id="cgt:cgR_1395"/>
<dbReference type="HOGENOM" id="CLU_039268_0_1_11"/>
<dbReference type="PhylomeDB" id="A4QDT4"/>
<dbReference type="UniPathway" id="UPA00219"/>
<dbReference type="Proteomes" id="UP000006698">
    <property type="component" value="Chromosome"/>
</dbReference>
<dbReference type="GO" id="GO:0005829">
    <property type="term" value="C:cytosol"/>
    <property type="evidence" value="ECO:0007669"/>
    <property type="project" value="TreeGrafter"/>
</dbReference>
<dbReference type="GO" id="GO:0005524">
    <property type="term" value="F:ATP binding"/>
    <property type="evidence" value="ECO:0007669"/>
    <property type="project" value="UniProtKB-KW"/>
</dbReference>
<dbReference type="GO" id="GO:0008716">
    <property type="term" value="F:D-alanine-D-alanine ligase activity"/>
    <property type="evidence" value="ECO:0007669"/>
    <property type="project" value="UniProtKB-UniRule"/>
</dbReference>
<dbReference type="GO" id="GO:0046872">
    <property type="term" value="F:metal ion binding"/>
    <property type="evidence" value="ECO:0007669"/>
    <property type="project" value="UniProtKB-KW"/>
</dbReference>
<dbReference type="GO" id="GO:0071555">
    <property type="term" value="P:cell wall organization"/>
    <property type="evidence" value="ECO:0007669"/>
    <property type="project" value="UniProtKB-KW"/>
</dbReference>
<dbReference type="GO" id="GO:0009252">
    <property type="term" value="P:peptidoglycan biosynthetic process"/>
    <property type="evidence" value="ECO:0007669"/>
    <property type="project" value="UniProtKB-UniRule"/>
</dbReference>
<dbReference type="GO" id="GO:0008360">
    <property type="term" value="P:regulation of cell shape"/>
    <property type="evidence" value="ECO:0007669"/>
    <property type="project" value="UniProtKB-KW"/>
</dbReference>
<dbReference type="FunFam" id="3.30.470.20:FF:000008">
    <property type="entry name" value="D-alanine--D-alanine ligase"/>
    <property type="match status" value="1"/>
</dbReference>
<dbReference type="Gene3D" id="3.40.50.20">
    <property type="match status" value="1"/>
</dbReference>
<dbReference type="Gene3D" id="3.30.1490.20">
    <property type="entry name" value="ATP-grasp fold, A domain"/>
    <property type="match status" value="1"/>
</dbReference>
<dbReference type="Gene3D" id="3.30.470.20">
    <property type="entry name" value="ATP-grasp fold, B domain"/>
    <property type="match status" value="1"/>
</dbReference>
<dbReference type="HAMAP" id="MF_00047">
    <property type="entry name" value="Dala_Dala_lig"/>
    <property type="match status" value="1"/>
</dbReference>
<dbReference type="InterPro" id="IPR011761">
    <property type="entry name" value="ATP-grasp"/>
</dbReference>
<dbReference type="InterPro" id="IPR013815">
    <property type="entry name" value="ATP_grasp_subdomain_1"/>
</dbReference>
<dbReference type="InterPro" id="IPR000291">
    <property type="entry name" value="D-Ala_lig_Van_CS"/>
</dbReference>
<dbReference type="InterPro" id="IPR005905">
    <property type="entry name" value="D_ala_D_ala"/>
</dbReference>
<dbReference type="InterPro" id="IPR011095">
    <property type="entry name" value="Dala_Dala_lig_C"/>
</dbReference>
<dbReference type="InterPro" id="IPR011127">
    <property type="entry name" value="Dala_Dala_lig_N"/>
</dbReference>
<dbReference type="InterPro" id="IPR016185">
    <property type="entry name" value="PreATP-grasp_dom_sf"/>
</dbReference>
<dbReference type="NCBIfam" id="TIGR01205">
    <property type="entry name" value="D_ala_D_alaTIGR"/>
    <property type="match status" value="1"/>
</dbReference>
<dbReference type="NCBIfam" id="NF002528">
    <property type="entry name" value="PRK01966.1-4"/>
    <property type="match status" value="1"/>
</dbReference>
<dbReference type="PANTHER" id="PTHR23132">
    <property type="entry name" value="D-ALANINE--D-ALANINE LIGASE"/>
    <property type="match status" value="1"/>
</dbReference>
<dbReference type="PANTHER" id="PTHR23132:SF25">
    <property type="entry name" value="D-ALANINE--D-ALANINE LIGASE A"/>
    <property type="match status" value="1"/>
</dbReference>
<dbReference type="Pfam" id="PF07478">
    <property type="entry name" value="Dala_Dala_lig_C"/>
    <property type="match status" value="1"/>
</dbReference>
<dbReference type="Pfam" id="PF01820">
    <property type="entry name" value="Dala_Dala_lig_N"/>
    <property type="match status" value="1"/>
</dbReference>
<dbReference type="PIRSF" id="PIRSF039102">
    <property type="entry name" value="Ddl/VanB"/>
    <property type="match status" value="1"/>
</dbReference>
<dbReference type="SUPFAM" id="SSF56059">
    <property type="entry name" value="Glutathione synthetase ATP-binding domain-like"/>
    <property type="match status" value="1"/>
</dbReference>
<dbReference type="SUPFAM" id="SSF52440">
    <property type="entry name" value="PreATP-grasp domain"/>
    <property type="match status" value="1"/>
</dbReference>
<dbReference type="PROSITE" id="PS50975">
    <property type="entry name" value="ATP_GRASP"/>
    <property type="match status" value="1"/>
</dbReference>
<dbReference type="PROSITE" id="PS00843">
    <property type="entry name" value="DALA_DALA_LIGASE_1"/>
    <property type="match status" value="1"/>
</dbReference>
<dbReference type="PROSITE" id="PS00844">
    <property type="entry name" value="DALA_DALA_LIGASE_2"/>
    <property type="match status" value="1"/>
</dbReference>
<comment type="function">
    <text evidence="2">Cell wall formation.</text>
</comment>
<comment type="catalytic activity">
    <reaction evidence="2">
        <text>2 D-alanine + ATP = D-alanyl-D-alanine + ADP + phosphate + H(+)</text>
        <dbReference type="Rhea" id="RHEA:11224"/>
        <dbReference type="ChEBI" id="CHEBI:15378"/>
        <dbReference type="ChEBI" id="CHEBI:30616"/>
        <dbReference type="ChEBI" id="CHEBI:43474"/>
        <dbReference type="ChEBI" id="CHEBI:57416"/>
        <dbReference type="ChEBI" id="CHEBI:57822"/>
        <dbReference type="ChEBI" id="CHEBI:456216"/>
        <dbReference type="EC" id="6.3.2.4"/>
    </reaction>
</comment>
<comment type="cofactor">
    <cofactor evidence="1">
        <name>Mg(2+)</name>
        <dbReference type="ChEBI" id="CHEBI:18420"/>
    </cofactor>
    <cofactor evidence="1">
        <name>Mn(2+)</name>
        <dbReference type="ChEBI" id="CHEBI:29035"/>
    </cofactor>
    <text evidence="1">Binds 2 magnesium or manganese ions per subunit.</text>
</comment>
<comment type="pathway">
    <text evidence="2">Cell wall biogenesis; peptidoglycan biosynthesis.</text>
</comment>
<comment type="subcellular location">
    <subcellularLocation>
        <location evidence="2">Cytoplasm</location>
    </subcellularLocation>
</comment>
<comment type="similarity">
    <text evidence="2">Belongs to the D-alanine--D-alanine ligase family.</text>
</comment>
<organism>
    <name type="scientific">Corynebacterium glutamicum (strain R)</name>
    <dbReference type="NCBI Taxonomy" id="340322"/>
    <lineage>
        <taxon>Bacteria</taxon>
        <taxon>Bacillati</taxon>
        <taxon>Actinomycetota</taxon>
        <taxon>Actinomycetes</taxon>
        <taxon>Mycobacteriales</taxon>
        <taxon>Corynebacteriaceae</taxon>
        <taxon>Corynebacterium</taxon>
    </lineage>
</organism>
<proteinExistence type="inferred from homology"/>
<name>DDL_CORGB</name>
<feature type="chain" id="PRO_1000030443" description="D-alanine--D-alanine ligase">
    <location>
        <begin position="1"/>
        <end position="360"/>
    </location>
</feature>
<feature type="domain" description="ATP-grasp" evidence="2">
    <location>
        <begin position="149"/>
        <end position="353"/>
    </location>
</feature>
<feature type="binding site" evidence="2">
    <location>
        <begin position="176"/>
        <end position="231"/>
    </location>
    <ligand>
        <name>ATP</name>
        <dbReference type="ChEBI" id="CHEBI:30616"/>
    </ligand>
</feature>
<feature type="binding site" evidence="2">
    <location>
        <position position="308"/>
    </location>
    <ligand>
        <name>Mg(2+)</name>
        <dbReference type="ChEBI" id="CHEBI:18420"/>
        <label>1</label>
    </ligand>
</feature>
<feature type="binding site" evidence="2">
    <location>
        <position position="320"/>
    </location>
    <ligand>
        <name>Mg(2+)</name>
        <dbReference type="ChEBI" id="CHEBI:18420"/>
        <label>1</label>
    </ligand>
</feature>
<feature type="binding site" evidence="2">
    <location>
        <position position="320"/>
    </location>
    <ligand>
        <name>Mg(2+)</name>
        <dbReference type="ChEBI" id="CHEBI:18420"/>
        <label>2</label>
    </ligand>
</feature>
<feature type="binding site" evidence="2">
    <location>
        <position position="322"/>
    </location>
    <ligand>
        <name>Mg(2+)</name>
        <dbReference type="ChEBI" id="CHEBI:18420"/>
        <label>2</label>
    </ligand>
</feature>
<protein>
    <recommendedName>
        <fullName evidence="2">D-alanine--D-alanine ligase</fullName>
        <ecNumber evidence="2">6.3.2.4</ecNumber>
    </recommendedName>
    <alternativeName>
        <fullName evidence="2">D-Ala-D-Ala ligase</fullName>
    </alternativeName>
    <alternativeName>
        <fullName evidence="2">D-alanylalanine synthetase</fullName>
    </alternativeName>
</protein>
<accession>A4QDT4</accession>
<evidence type="ECO:0000250" key="1"/>
<evidence type="ECO:0000255" key="2">
    <source>
        <dbReference type="HAMAP-Rule" id="MF_00047"/>
    </source>
</evidence>
<reference key="1">
    <citation type="journal article" date="2007" name="Microbiology">
        <title>Comparative analysis of the Corynebacterium glutamicum group and complete genome sequence of strain R.</title>
        <authorList>
            <person name="Yukawa H."/>
            <person name="Omumasaba C.A."/>
            <person name="Nonaka H."/>
            <person name="Kos P."/>
            <person name="Okai N."/>
            <person name="Suzuki N."/>
            <person name="Suda M."/>
            <person name="Tsuge Y."/>
            <person name="Watanabe J."/>
            <person name="Ikeda Y."/>
            <person name="Vertes A.A."/>
            <person name="Inui M."/>
        </authorList>
    </citation>
    <scope>NUCLEOTIDE SEQUENCE [LARGE SCALE GENOMIC DNA]</scope>
    <source>
        <strain>R</strain>
    </source>
</reference>
<gene>
    <name evidence="2" type="primary">ddl</name>
    <name type="ordered locus">cgR_1395</name>
</gene>